<geneLocation type="plasmid">
    <name>pIP404</name>
</geneLocation>
<proteinExistence type="predicted"/>
<sequence length="406" mass="48801">MRNALKLNKKNYIDNIHSRSKGWITRSVIDKKGYSQWHYKYAELKDLDMSDENIYITLNTFYKPCRRLENIKELNTLFIDLDYYKTGKTKDQVLMDLEKNYFNQSIPIPNYVIDSGRGMYLIWIINAVPSKALPLWKAVQEYLYNQLKYFGADRQALDATRILRVPGSINSKSKTVVNILDEYEYIYDLREIQNGFLPELKPYERKKGRPSKINYIYRERSLYYGRIQDIIKLCELREYDLKGHRELILFLYRYYLCSFTEDIEKALNDVLELNSMFRQHLSEREVIRATRSAERCYLDKNKQYKYKNETLIELLEITEEEQKYMTIIISKKEYKRRENIRGKKNYQEQLKAKGKATKKEELNVLRKKIKALKEKGFKNKEITLMLEVPIKTLERHITYMKKNGLL</sequence>
<evidence type="ECO:0000305" key="1"/>
<organism>
    <name type="scientific">Clostridium perfringens</name>
    <dbReference type="NCBI Taxonomy" id="1502"/>
    <lineage>
        <taxon>Bacteria</taxon>
        <taxon>Bacillati</taxon>
        <taxon>Bacillota</taxon>
        <taxon>Clostridia</taxon>
        <taxon>Eubacteriales</taxon>
        <taxon>Clostridiaceae</taxon>
        <taxon>Clostridium</taxon>
    </lineage>
</organism>
<keyword id="KW-0235">DNA replication</keyword>
<keyword id="KW-0238">DNA-binding</keyword>
<keyword id="KW-0614">Plasmid</keyword>
<reference key="1">
    <citation type="journal article" date="1988" name="Plasmid">
        <title>Complete nucleotide sequence and genetic organization of the bacteriocinogenic plasmid, pIP404, from Clostridium perfringens.</title>
        <authorList>
            <person name="Garnier T."/>
            <person name="Cole S.T."/>
        </authorList>
    </citation>
    <scope>NUCLEOTIDE SEQUENCE [GENOMIC DNA]</scope>
    <source>
        <strain>CPN50</strain>
    </source>
</reference>
<reference key="2">
    <citation type="journal article" date="1992" name="Plasmid">
        <title>Construction of a sequenced Clostridium perfringens-Escherichia coli shuttle plasmid.</title>
        <authorList>
            <person name="Sloan J."/>
            <person name="Warner T.A."/>
            <person name="Scott P.T."/>
            <person name="Bannam T.L."/>
            <person name="Berryman D.I."/>
            <person name="Rood J.I."/>
        </authorList>
    </citation>
    <scope>NUCLEOTIDE SEQUENCE [GENOMIC DNA]</scope>
</reference>
<dbReference type="EMBL" id="M32882">
    <property type="protein sequence ID" value="AAA98251.1"/>
    <property type="molecule type" value="Genomic_DNA"/>
</dbReference>
<dbReference type="EMBL" id="M77169">
    <property type="protein sequence ID" value="AAA73114.1"/>
    <property type="status" value="ALT_INIT"/>
    <property type="molecule type" value="Genomic_DNA"/>
</dbReference>
<dbReference type="EMBL" id="L02937">
    <property type="protein sequence ID" value="AAC36951.2"/>
    <property type="molecule type" value="Genomic_DNA"/>
</dbReference>
<dbReference type="EMBL" id="L02938">
    <property type="protein sequence ID" value="AAC36954.2"/>
    <property type="molecule type" value="Genomic_DNA"/>
</dbReference>
<dbReference type="PIR" id="JT0357">
    <property type="entry name" value="JT0357"/>
</dbReference>
<dbReference type="RefSeq" id="NP_040453.1">
    <property type="nucleotide sequence ID" value="NC_001388.1"/>
</dbReference>
<dbReference type="RefSeq" id="WP_010889925.1">
    <property type="nucleotide sequence ID" value="NC_001388.1"/>
</dbReference>
<dbReference type="GO" id="GO:0003677">
    <property type="term" value="F:DNA binding"/>
    <property type="evidence" value="ECO:0007669"/>
    <property type="project" value="UniProtKB-KW"/>
</dbReference>
<dbReference type="GO" id="GO:0006260">
    <property type="term" value="P:DNA replication"/>
    <property type="evidence" value="ECO:0007669"/>
    <property type="project" value="UniProtKB-KW"/>
</dbReference>
<name>REP_CLOPF</name>
<feature type="chain" id="PRO_0000068314" description="Replication protein">
    <location>
        <begin position="1"/>
        <end position="406"/>
    </location>
</feature>
<accession>P18016</accession>
<gene>
    <name type="primary">rep</name>
</gene>
<protein>
    <recommendedName>
        <fullName>Replication protein</fullName>
    </recommendedName>
    <alternativeName>
        <fullName>ORF5</fullName>
    </alternativeName>
</protein>
<comment type="function">
    <text>Is involved in replication of pIP404.</text>
</comment>
<comment type="sequence caution" evidence="1">
    <conflict type="erroneous initiation">
        <sequence resource="EMBL-CDS" id="AAA73114"/>
    </conflict>
</comment>